<protein>
    <recommendedName>
        <fullName evidence="1">Cysteine--tRNA ligase</fullName>
        <ecNumber evidence="1">6.1.1.16</ecNumber>
    </recommendedName>
    <alternativeName>
        <fullName evidence="1">Cysteinyl-tRNA synthetase</fullName>
        <shortName evidence="1">CysRS</shortName>
    </alternativeName>
</protein>
<proteinExistence type="inferred from homology"/>
<keyword id="KW-0030">Aminoacyl-tRNA synthetase</keyword>
<keyword id="KW-0067">ATP-binding</keyword>
<keyword id="KW-0963">Cytoplasm</keyword>
<keyword id="KW-0436">Ligase</keyword>
<keyword id="KW-0479">Metal-binding</keyword>
<keyword id="KW-0547">Nucleotide-binding</keyword>
<keyword id="KW-0648">Protein biosynthesis</keyword>
<keyword id="KW-0862">Zinc</keyword>
<accession>A7FZ91</accession>
<organism>
    <name type="scientific">Clostridium botulinum (strain ATCC 19397 / Type A)</name>
    <dbReference type="NCBI Taxonomy" id="441770"/>
    <lineage>
        <taxon>Bacteria</taxon>
        <taxon>Bacillati</taxon>
        <taxon>Bacillota</taxon>
        <taxon>Clostridia</taxon>
        <taxon>Eubacteriales</taxon>
        <taxon>Clostridiaceae</taxon>
        <taxon>Clostridium</taxon>
    </lineage>
</organism>
<dbReference type="EC" id="6.1.1.16" evidence="1"/>
<dbReference type="EMBL" id="CP000726">
    <property type="protein sequence ID" value="ABS35438.1"/>
    <property type="molecule type" value="Genomic_DNA"/>
</dbReference>
<dbReference type="RefSeq" id="WP_012048360.1">
    <property type="nucleotide sequence ID" value="NC_009697.1"/>
</dbReference>
<dbReference type="SMR" id="A7FZ91"/>
<dbReference type="GeneID" id="5187627"/>
<dbReference type="KEGG" id="cba:CLB_3561"/>
<dbReference type="HOGENOM" id="CLU_013528_0_1_9"/>
<dbReference type="GO" id="GO:0005829">
    <property type="term" value="C:cytosol"/>
    <property type="evidence" value="ECO:0007669"/>
    <property type="project" value="TreeGrafter"/>
</dbReference>
<dbReference type="GO" id="GO:0005524">
    <property type="term" value="F:ATP binding"/>
    <property type="evidence" value="ECO:0007669"/>
    <property type="project" value="UniProtKB-UniRule"/>
</dbReference>
<dbReference type="GO" id="GO:0004817">
    <property type="term" value="F:cysteine-tRNA ligase activity"/>
    <property type="evidence" value="ECO:0007669"/>
    <property type="project" value="UniProtKB-UniRule"/>
</dbReference>
<dbReference type="GO" id="GO:0008270">
    <property type="term" value="F:zinc ion binding"/>
    <property type="evidence" value="ECO:0007669"/>
    <property type="project" value="UniProtKB-UniRule"/>
</dbReference>
<dbReference type="GO" id="GO:0006423">
    <property type="term" value="P:cysteinyl-tRNA aminoacylation"/>
    <property type="evidence" value="ECO:0007669"/>
    <property type="project" value="UniProtKB-UniRule"/>
</dbReference>
<dbReference type="CDD" id="cd00672">
    <property type="entry name" value="CysRS_core"/>
    <property type="match status" value="1"/>
</dbReference>
<dbReference type="FunFam" id="3.40.50.620:FF:000009">
    <property type="entry name" value="Cysteine--tRNA ligase"/>
    <property type="match status" value="1"/>
</dbReference>
<dbReference type="Gene3D" id="1.20.120.1910">
    <property type="entry name" value="Cysteine-tRNA ligase, C-terminal anti-codon recognition domain"/>
    <property type="match status" value="1"/>
</dbReference>
<dbReference type="Gene3D" id="3.40.50.620">
    <property type="entry name" value="HUPs"/>
    <property type="match status" value="1"/>
</dbReference>
<dbReference type="HAMAP" id="MF_00041">
    <property type="entry name" value="Cys_tRNA_synth"/>
    <property type="match status" value="1"/>
</dbReference>
<dbReference type="InterPro" id="IPR015803">
    <property type="entry name" value="Cys-tRNA-ligase"/>
</dbReference>
<dbReference type="InterPro" id="IPR015273">
    <property type="entry name" value="Cys-tRNA-synt_Ia_DALR"/>
</dbReference>
<dbReference type="InterPro" id="IPR024909">
    <property type="entry name" value="Cys-tRNA/MSH_ligase"/>
</dbReference>
<dbReference type="InterPro" id="IPR056411">
    <property type="entry name" value="CysS_C"/>
</dbReference>
<dbReference type="InterPro" id="IPR014729">
    <property type="entry name" value="Rossmann-like_a/b/a_fold"/>
</dbReference>
<dbReference type="InterPro" id="IPR032678">
    <property type="entry name" value="tRNA-synt_1_cat_dom"/>
</dbReference>
<dbReference type="InterPro" id="IPR009080">
    <property type="entry name" value="tRNAsynth_Ia_anticodon-bd"/>
</dbReference>
<dbReference type="NCBIfam" id="TIGR00435">
    <property type="entry name" value="cysS"/>
    <property type="match status" value="1"/>
</dbReference>
<dbReference type="PANTHER" id="PTHR10890:SF3">
    <property type="entry name" value="CYSTEINE--TRNA LIGASE, CYTOPLASMIC"/>
    <property type="match status" value="1"/>
</dbReference>
<dbReference type="PANTHER" id="PTHR10890">
    <property type="entry name" value="CYSTEINYL-TRNA SYNTHETASE"/>
    <property type="match status" value="1"/>
</dbReference>
<dbReference type="Pfam" id="PF23493">
    <property type="entry name" value="CysS_C"/>
    <property type="match status" value="1"/>
</dbReference>
<dbReference type="Pfam" id="PF09190">
    <property type="entry name" value="DALR_2"/>
    <property type="match status" value="1"/>
</dbReference>
<dbReference type="Pfam" id="PF01406">
    <property type="entry name" value="tRNA-synt_1e"/>
    <property type="match status" value="1"/>
</dbReference>
<dbReference type="PRINTS" id="PR00983">
    <property type="entry name" value="TRNASYNTHCYS"/>
</dbReference>
<dbReference type="SMART" id="SM00840">
    <property type="entry name" value="DALR_2"/>
    <property type="match status" value="1"/>
</dbReference>
<dbReference type="SUPFAM" id="SSF47323">
    <property type="entry name" value="Anticodon-binding domain of a subclass of class I aminoacyl-tRNA synthetases"/>
    <property type="match status" value="1"/>
</dbReference>
<dbReference type="SUPFAM" id="SSF52374">
    <property type="entry name" value="Nucleotidylyl transferase"/>
    <property type="match status" value="1"/>
</dbReference>
<comment type="catalytic activity">
    <reaction evidence="1">
        <text>tRNA(Cys) + L-cysteine + ATP = L-cysteinyl-tRNA(Cys) + AMP + diphosphate</text>
        <dbReference type="Rhea" id="RHEA:17773"/>
        <dbReference type="Rhea" id="RHEA-COMP:9661"/>
        <dbReference type="Rhea" id="RHEA-COMP:9679"/>
        <dbReference type="ChEBI" id="CHEBI:30616"/>
        <dbReference type="ChEBI" id="CHEBI:33019"/>
        <dbReference type="ChEBI" id="CHEBI:35235"/>
        <dbReference type="ChEBI" id="CHEBI:78442"/>
        <dbReference type="ChEBI" id="CHEBI:78517"/>
        <dbReference type="ChEBI" id="CHEBI:456215"/>
        <dbReference type="EC" id="6.1.1.16"/>
    </reaction>
</comment>
<comment type="cofactor">
    <cofactor evidence="1">
        <name>Zn(2+)</name>
        <dbReference type="ChEBI" id="CHEBI:29105"/>
    </cofactor>
    <text evidence="1">Binds 1 zinc ion per subunit.</text>
</comment>
<comment type="subunit">
    <text evidence="1">Monomer.</text>
</comment>
<comment type="subcellular location">
    <subcellularLocation>
        <location evidence="1">Cytoplasm</location>
    </subcellularLocation>
</comment>
<comment type="similarity">
    <text evidence="1">Belongs to the class-I aminoacyl-tRNA synthetase family.</text>
</comment>
<reference key="1">
    <citation type="journal article" date="2007" name="PLoS ONE">
        <title>Analysis of the neurotoxin complex genes in Clostridium botulinum A1-A4 and B1 strains: BoNT/A3, /Ba4 and /B1 clusters are located within plasmids.</title>
        <authorList>
            <person name="Smith T.J."/>
            <person name="Hill K.K."/>
            <person name="Foley B.T."/>
            <person name="Detter J.C."/>
            <person name="Munk A.C."/>
            <person name="Bruce D.C."/>
            <person name="Doggett N.A."/>
            <person name="Smith L.A."/>
            <person name="Marks J.D."/>
            <person name="Xie G."/>
            <person name="Brettin T.S."/>
        </authorList>
    </citation>
    <scope>NUCLEOTIDE SEQUENCE [LARGE SCALE GENOMIC DNA]</scope>
    <source>
        <strain>ATCC 19397 / Type A</strain>
    </source>
</reference>
<gene>
    <name evidence="1" type="primary">cysS</name>
    <name type="ordered locus">CLB_3561</name>
</gene>
<evidence type="ECO:0000255" key="1">
    <source>
        <dbReference type="HAMAP-Rule" id="MF_00041"/>
    </source>
</evidence>
<name>SYC_CLOB1</name>
<sequence>MKVYNTLTNKKEEFLTLVPGEVKMYVCGPTVYNFFHIGNARTFVVFDTIRRYLEYRGYKVKFIQNFTDIDDKMIKRANEEGSTVKELGDRFIKEYYKDADDLNIERATKNPRATEFMEEIIKFVSDLIEKGYAYEIDGDVYFSTKKFNSYGKLSGQNLEELQLGARINVDERKKDPMDFAIWKSQKPGEPAWESPWGMGRPGWHIECSCMAYNLLGETIDIHAGGSDLSFPHHENEIAQSEARTGKQFAKYWLHSAFVNVNNQKMSKSLNNFFTAREILEKYDADVLRMFMLSGHYRTQINFSMELLDSTKAALDRLYNSINNLENLLDEVKNEELRDEELEYKNELQKYKEKYIEKMDDDFNTADAISIIFDLIRDVNTNVTIESSKELVKYTLDLIRELGSPLGILQESTKASLEEEIEKLIEERQKARKEKNWALADKIRDNLKERGIVLEDTPQGIRWKQI</sequence>
<feature type="chain" id="PRO_0000332801" description="Cysteine--tRNA ligase">
    <location>
        <begin position="1"/>
        <end position="465"/>
    </location>
</feature>
<feature type="short sequence motif" description="'HIGH' region">
    <location>
        <begin position="29"/>
        <end position="39"/>
    </location>
</feature>
<feature type="short sequence motif" description="'KMSKS' region">
    <location>
        <begin position="264"/>
        <end position="268"/>
    </location>
</feature>
<feature type="binding site" evidence="1">
    <location>
        <position position="27"/>
    </location>
    <ligand>
        <name>Zn(2+)</name>
        <dbReference type="ChEBI" id="CHEBI:29105"/>
    </ligand>
</feature>
<feature type="binding site" evidence="1">
    <location>
        <position position="207"/>
    </location>
    <ligand>
        <name>Zn(2+)</name>
        <dbReference type="ChEBI" id="CHEBI:29105"/>
    </ligand>
</feature>
<feature type="binding site" evidence="1">
    <location>
        <position position="232"/>
    </location>
    <ligand>
        <name>Zn(2+)</name>
        <dbReference type="ChEBI" id="CHEBI:29105"/>
    </ligand>
</feature>
<feature type="binding site" evidence="1">
    <location>
        <position position="236"/>
    </location>
    <ligand>
        <name>Zn(2+)</name>
        <dbReference type="ChEBI" id="CHEBI:29105"/>
    </ligand>
</feature>
<feature type="binding site" evidence="1">
    <location>
        <position position="267"/>
    </location>
    <ligand>
        <name>ATP</name>
        <dbReference type="ChEBI" id="CHEBI:30616"/>
    </ligand>
</feature>